<name>URED_PROM3</name>
<gene>
    <name evidence="1" type="primary">ureD</name>
    <name type="ordered locus">P9303_29781</name>
</gene>
<reference key="1">
    <citation type="journal article" date="2007" name="PLoS Genet.">
        <title>Patterns and implications of gene gain and loss in the evolution of Prochlorococcus.</title>
        <authorList>
            <person name="Kettler G.C."/>
            <person name="Martiny A.C."/>
            <person name="Huang K."/>
            <person name="Zucker J."/>
            <person name="Coleman M.L."/>
            <person name="Rodrigue S."/>
            <person name="Chen F."/>
            <person name="Lapidus A."/>
            <person name="Ferriera S."/>
            <person name="Johnson J."/>
            <person name="Steglich C."/>
            <person name="Church G.M."/>
            <person name="Richardson P."/>
            <person name="Chisholm S.W."/>
        </authorList>
    </citation>
    <scope>NUCLEOTIDE SEQUENCE [LARGE SCALE GENOMIC DNA]</scope>
    <source>
        <strain>MIT 9303</strain>
    </source>
</reference>
<feature type="chain" id="PRO_0000340477" description="Urease accessory protein UreD">
    <location>
        <begin position="1"/>
        <end position="299"/>
    </location>
</feature>
<sequence length="299" mass="33094">MTGDRPWHGQCSLQLISKTAADDLQSQLTVHQSQCTAPFKIQRANLDDDGRCQLPLLHTAGGLVGGDQLSVNVKAGASSRGLVTSVAAQKVYGSVGRSKQHPKGLWASQECHFELATNADLEWLPQELVVFQGGLYKQRMQVELQPKASFLSAEVVRLGRTAAGETLNEGAWRSSLEICRQTPIGRQWELVDQLELNSDVLQNLHGMGRQPVFGSFVWAAPDPLTAEVMETLLRNCRTDRANLEGSMACGGLDQGLVARYIGPSSQAARQWFTRIWARTRQLRRLSTPQPPREWPLQEE</sequence>
<comment type="function">
    <text evidence="1">Required for maturation of urease via the functional incorporation of the urease nickel metallocenter.</text>
</comment>
<comment type="subunit">
    <text evidence="1">UreD, UreF and UreG form a complex that acts as a GTP-hydrolysis-dependent molecular chaperone, activating the urease apoprotein by helping to assemble the nickel containing metallocenter of UreC. The UreE protein probably delivers the nickel.</text>
</comment>
<comment type="subcellular location">
    <subcellularLocation>
        <location evidence="1">Cytoplasm</location>
    </subcellularLocation>
</comment>
<comment type="similarity">
    <text evidence="1">Belongs to the UreD family.</text>
</comment>
<dbReference type="EMBL" id="CP000554">
    <property type="protein sequence ID" value="ABM79708.1"/>
    <property type="molecule type" value="Genomic_DNA"/>
</dbReference>
<dbReference type="RefSeq" id="WP_011827546.1">
    <property type="nucleotide sequence ID" value="NC_008820.1"/>
</dbReference>
<dbReference type="SMR" id="A2CDZ8"/>
<dbReference type="STRING" id="59922.P9303_29781"/>
<dbReference type="KEGG" id="pmf:P9303_29781"/>
<dbReference type="HOGENOM" id="CLU_056339_4_0_3"/>
<dbReference type="BioCyc" id="PMAR59922:G1G80-2614-MONOMER"/>
<dbReference type="Proteomes" id="UP000002274">
    <property type="component" value="Chromosome"/>
</dbReference>
<dbReference type="GO" id="GO:0005737">
    <property type="term" value="C:cytoplasm"/>
    <property type="evidence" value="ECO:0007669"/>
    <property type="project" value="UniProtKB-SubCell"/>
</dbReference>
<dbReference type="GO" id="GO:0016151">
    <property type="term" value="F:nickel cation binding"/>
    <property type="evidence" value="ECO:0007669"/>
    <property type="project" value="UniProtKB-UniRule"/>
</dbReference>
<dbReference type="HAMAP" id="MF_01384">
    <property type="entry name" value="UreD"/>
    <property type="match status" value="1"/>
</dbReference>
<dbReference type="InterPro" id="IPR002669">
    <property type="entry name" value="UreD"/>
</dbReference>
<dbReference type="PANTHER" id="PTHR33643">
    <property type="entry name" value="UREASE ACCESSORY PROTEIN D"/>
    <property type="match status" value="1"/>
</dbReference>
<dbReference type="PANTHER" id="PTHR33643:SF1">
    <property type="entry name" value="UREASE ACCESSORY PROTEIN D"/>
    <property type="match status" value="1"/>
</dbReference>
<dbReference type="Pfam" id="PF01774">
    <property type="entry name" value="UreD"/>
    <property type="match status" value="1"/>
</dbReference>
<evidence type="ECO:0000255" key="1">
    <source>
        <dbReference type="HAMAP-Rule" id="MF_01384"/>
    </source>
</evidence>
<proteinExistence type="inferred from homology"/>
<organism>
    <name type="scientific">Prochlorococcus marinus (strain MIT 9303)</name>
    <dbReference type="NCBI Taxonomy" id="59922"/>
    <lineage>
        <taxon>Bacteria</taxon>
        <taxon>Bacillati</taxon>
        <taxon>Cyanobacteriota</taxon>
        <taxon>Cyanophyceae</taxon>
        <taxon>Synechococcales</taxon>
        <taxon>Prochlorococcaceae</taxon>
        <taxon>Prochlorococcus</taxon>
    </lineage>
</organism>
<protein>
    <recommendedName>
        <fullName evidence="1">Urease accessory protein UreD</fullName>
    </recommendedName>
</protein>
<accession>A2CDZ8</accession>
<keyword id="KW-0143">Chaperone</keyword>
<keyword id="KW-0963">Cytoplasm</keyword>
<keyword id="KW-0996">Nickel insertion</keyword>